<proteinExistence type="evidence at protein level"/>
<protein>
    <recommendedName>
        <fullName>Alpha-L-iduronidase</fullName>
        <ecNumber>3.2.1.76</ecNumber>
    </recommendedName>
</protein>
<comment type="catalytic activity">
    <reaction evidence="15 16">
        <text>Hydrolysis of unsulfated alpha-L-iduronosidic linkages in dermatan sulfate.</text>
        <dbReference type="EC" id="3.2.1.76"/>
    </reaction>
</comment>
<comment type="subunit">
    <text evidence="15 16">Monomer.</text>
</comment>
<comment type="subcellular location">
    <subcellularLocation>
        <location evidence="30">Lysosome</location>
    </subcellularLocation>
</comment>
<comment type="alternative products">
    <event type="alternative splicing"/>
    <isoform>
        <id>P35475-1</id>
        <name>1</name>
        <sequence type="displayed"/>
    </isoform>
    <isoform>
        <id>P35475-2</id>
        <name>2</name>
        <sequence type="described" ref="VSP_057029 VSP_057030"/>
    </isoform>
</comment>
<comment type="tissue specificity">
    <text>Ubiquitous.</text>
</comment>
<comment type="PTM">
    <text evidence="11 15 16">N-glycosylation at Asn-372 contributes to substrate binding and is required for full enzymatic activity.</text>
</comment>
<comment type="disease" evidence="4 5 6 7 10 12 14 16 18 19 20 21 22 25 26 28">
    <disease id="DI-00770">
        <name>Mucopolysaccharidosis 1H</name>
        <acronym>MPS1H</acronym>
        <description>A severe form of mucopolysaccharidosis type 1, a rare lysosomal storage disease characterized by progressive physical deterioration with urinary excretion of dermatan sulfate and heparan sulfate. Patients with MPS1H usually present, within the first year of life, a combination of hepatosplenomegaly, skeletal deformities, corneal clouding and severe intellectual disability. Obstructive airways disease, respiratory infection and cardiac complications usually result in death before 10 years of age.</description>
        <dbReference type="MIM" id="607014"/>
    </disease>
    <text>The disease is caused by variants affecting the gene represented in this entry.</text>
</comment>
<comment type="disease" evidence="4 5 6 10 14 19 20 26">
    <disease id="DI-00771">
        <name>Mucopolysaccharidosis 1H/S</name>
        <acronym>MPS1H/S</acronym>
        <description>A form of mucopolysaccharidosis type 1, a rare lysosomal storage disease characterized by progressive physical deterioration with urinary excretion of dermatan sulfate and heparan sulfate. MPS1H/S represents an intermediate phenotype of the MPS1 clinical spectrum. It is characterized by relatively little neurological involvement, but most of the somatic symptoms described for severe MPS1 develop in the early to mid-teens, causing considerable loss of mobility.</description>
        <dbReference type="MIM" id="607015"/>
    </disease>
    <text>The disease is caused by variants affecting the gene represented in this entry.</text>
</comment>
<comment type="disease" evidence="6 10 12 14 17 19 20 23">
    <disease id="DI-00772">
        <name>Mucopolysaccharidosis 1S</name>
        <acronym>MPS1S</acronym>
        <description>A mild form of mucopolysaccharidosis type 1, a rare lysosomal storage disease characterized by progressive physical deterioration with urinary excretion of dermatan sulfate and heparan sulfate. Patients with MPS1S may have little or no neurological involvement, normal stature and life span, but present development of joints stiffness, mild hepatosplenomegaly, aortic valve disease and corneal clouding.</description>
        <dbReference type="MIM" id="607016"/>
    </disease>
    <text>The disease is caused by variants affecting the gene represented in this entry.</text>
</comment>
<comment type="similarity">
    <text evidence="30">Belongs to the glycosyl hydrolase 39 family.</text>
</comment>
<gene>
    <name type="primary">IDUA</name>
</gene>
<dbReference type="EC" id="3.2.1.76"/>
<dbReference type="EMBL" id="M74715">
    <property type="protein sequence ID" value="AAA81589.1"/>
    <property type="molecule type" value="mRNA"/>
</dbReference>
<dbReference type="EMBL" id="M95740">
    <property type="protein sequence ID" value="AAA51698.1"/>
    <property type="molecule type" value="Genomic_DNA"/>
</dbReference>
<dbReference type="EMBL" id="M95739">
    <property type="protein sequence ID" value="AAA51698.1"/>
    <property type="status" value="JOINED"/>
    <property type="molecule type" value="Genomic_DNA"/>
</dbReference>
<dbReference type="EMBL" id="AK125223">
    <property type="protein sequence ID" value="BAG54168.1"/>
    <property type="molecule type" value="mRNA"/>
</dbReference>
<dbReference type="EMBL" id="AC019103">
    <property type="status" value="NOT_ANNOTATED_CDS"/>
    <property type="molecule type" value="Genomic_DNA"/>
</dbReference>
<dbReference type="CCDS" id="CCDS3343.1">
    <molecule id="P35475-1"/>
</dbReference>
<dbReference type="PIR" id="S53645">
    <property type="entry name" value="S53645"/>
</dbReference>
<dbReference type="RefSeq" id="NP_000194.2">
    <molecule id="P35475-1"/>
    <property type="nucleotide sequence ID" value="NM_000203.5"/>
</dbReference>
<dbReference type="RefSeq" id="XP_047271604.1">
    <molecule id="P35475-1"/>
    <property type="nucleotide sequence ID" value="XM_047415648.1"/>
</dbReference>
<dbReference type="RefSeq" id="XP_047271605.1">
    <molecule id="P35475-1"/>
    <property type="nucleotide sequence ID" value="XM_047415649.1"/>
</dbReference>
<dbReference type="PDB" id="3W81">
    <property type="method" value="X-ray"/>
    <property type="resolution" value="2.30 A"/>
    <property type="chains" value="A/B=27-653"/>
</dbReference>
<dbReference type="PDB" id="3W82">
    <property type="method" value="X-ray"/>
    <property type="resolution" value="2.76 A"/>
    <property type="chains" value="A/B=27-653"/>
</dbReference>
<dbReference type="PDB" id="4KGJ">
    <property type="method" value="X-ray"/>
    <property type="resolution" value="2.99 A"/>
    <property type="chains" value="A/B=27-653"/>
</dbReference>
<dbReference type="PDB" id="4KGL">
    <property type="method" value="X-ray"/>
    <property type="resolution" value="2.70 A"/>
    <property type="chains" value="A/B=27-653"/>
</dbReference>
<dbReference type="PDB" id="4KH2">
    <property type="method" value="X-ray"/>
    <property type="resolution" value="2.36 A"/>
    <property type="chains" value="A/B=27-653"/>
</dbReference>
<dbReference type="PDB" id="4MJ2">
    <property type="method" value="X-ray"/>
    <property type="resolution" value="2.10 A"/>
    <property type="chains" value="A/B=1-653"/>
</dbReference>
<dbReference type="PDB" id="4MJ4">
    <property type="method" value="X-ray"/>
    <property type="resolution" value="2.17 A"/>
    <property type="chains" value="A=1-653"/>
</dbReference>
<dbReference type="PDB" id="4OBR">
    <property type="method" value="X-ray"/>
    <property type="resolution" value="2.46 A"/>
    <property type="chains" value="A/B=27-653"/>
</dbReference>
<dbReference type="PDB" id="4OBS">
    <property type="method" value="X-ray"/>
    <property type="resolution" value="2.26 A"/>
    <property type="chains" value="A=27-653"/>
</dbReference>
<dbReference type="PDB" id="6I6R">
    <property type="method" value="X-ray"/>
    <property type="resolution" value="2.02 A"/>
    <property type="chains" value="A/B=27-653"/>
</dbReference>
<dbReference type="PDB" id="6I6X">
    <property type="method" value="X-ray"/>
    <property type="resolution" value="2.39 A"/>
    <property type="chains" value="A/B=27-653"/>
</dbReference>
<dbReference type="PDBsum" id="3W81"/>
<dbReference type="PDBsum" id="3W82"/>
<dbReference type="PDBsum" id="4KGJ"/>
<dbReference type="PDBsum" id="4KGL"/>
<dbReference type="PDBsum" id="4KH2"/>
<dbReference type="PDBsum" id="4MJ2"/>
<dbReference type="PDBsum" id="4MJ4"/>
<dbReference type="PDBsum" id="4OBR"/>
<dbReference type="PDBsum" id="4OBS"/>
<dbReference type="PDBsum" id="6I6R"/>
<dbReference type="PDBsum" id="6I6X"/>
<dbReference type="SMR" id="P35475"/>
<dbReference type="BioGRID" id="109651">
    <property type="interactions" value="91"/>
</dbReference>
<dbReference type="FunCoup" id="P35475">
    <property type="interactions" value="261"/>
</dbReference>
<dbReference type="IntAct" id="P35475">
    <property type="interactions" value="48"/>
</dbReference>
<dbReference type="STRING" id="9606.ENSP00000247933"/>
<dbReference type="BindingDB" id="P35475"/>
<dbReference type="ChEMBL" id="CHEMBL5169131"/>
<dbReference type="DrugBank" id="DB09301">
    <property type="generic name" value="Chondroitin sulfate"/>
</dbReference>
<dbReference type="CAZy" id="GH39">
    <property type="family name" value="Glycoside Hydrolase Family 39"/>
</dbReference>
<dbReference type="GlyConnect" id="1006">
    <property type="glycosylation" value="5 N-Linked glycans (2 sites)"/>
</dbReference>
<dbReference type="GlyCosmos" id="P35475">
    <property type="glycosylation" value="6 sites, 5 glycans"/>
</dbReference>
<dbReference type="GlyGen" id="P35475">
    <property type="glycosylation" value="7 sites, 10 N-linked glycans (4 sites)"/>
</dbReference>
<dbReference type="iPTMnet" id="P35475"/>
<dbReference type="PhosphoSitePlus" id="P35475"/>
<dbReference type="BioMuta" id="IDUA"/>
<dbReference type="DMDM" id="92090608"/>
<dbReference type="jPOST" id="P35475"/>
<dbReference type="MassIVE" id="P35475"/>
<dbReference type="PaxDb" id="9606-ENSP00000247933"/>
<dbReference type="PeptideAtlas" id="P35475"/>
<dbReference type="ProteomicsDB" id="3793"/>
<dbReference type="ProteomicsDB" id="55068">
    <molecule id="P35475-1"/>
</dbReference>
<dbReference type="Antibodypedia" id="43016">
    <property type="antibodies" value="216 antibodies from 26 providers"/>
</dbReference>
<dbReference type="DNASU" id="3425"/>
<dbReference type="Ensembl" id="ENST00000247933.9">
    <molecule id="P35475-1"/>
    <property type="protein sequence ID" value="ENSP00000247933.4"/>
    <property type="gene ID" value="ENSG00000127415.13"/>
</dbReference>
<dbReference type="Ensembl" id="ENST00000514224.2">
    <molecule id="P35475-1"/>
    <property type="protein sequence ID" value="ENSP00000425081.2"/>
    <property type="gene ID" value="ENSG00000127415.13"/>
</dbReference>
<dbReference type="GeneID" id="3425"/>
<dbReference type="KEGG" id="hsa:3425"/>
<dbReference type="MANE-Select" id="ENST00000514224.2">
    <property type="protein sequence ID" value="ENSP00000425081.2"/>
    <property type="RefSeq nucleotide sequence ID" value="NM_000203.5"/>
    <property type="RefSeq protein sequence ID" value="NP_000194.2"/>
</dbReference>
<dbReference type="UCSC" id="uc003gby.5">
    <molecule id="P35475-1"/>
    <property type="organism name" value="human"/>
</dbReference>
<dbReference type="AGR" id="HGNC:5391"/>
<dbReference type="CTD" id="3425"/>
<dbReference type="DisGeNET" id="3425"/>
<dbReference type="GeneCards" id="IDUA"/>
<dbReference type="GeneReviews" id="IDUA"/>
<dbReference type="HGNC" id="HGNC:5391">
    <property type="gene designation" value="IDUA"/>
</dbReference>
<dbReference type="HPA" id="ENSG00000127415">
    <property type="expression patterns" value="Low tissue specificity"/>
</dbReference>
<dbReference type="MalaCards" id="IDUA"/>
<dbReference type="MIM" id="252800">
    <property type="type" value="gene"/>
</dbReference>
<dbReference type="MIM" id="607014">
    <property type="type" value="phenotype"/>
</dbReference>
<dbReference type="MIM" id="607015">
    <property type="type" value="phenotype"/>
</dbReference>
<dbReference type="MIM" id="607016">
    <property type="type" value="phenotype"/>
</dbReference>
<dbReference type="neXtProt" id="NX_P35475"/>
<dbReference type="NIAGADS" id="ENSG00000127415"/>
<dbReference type="OpenTargets" id="ENSG00000127415"/>
<dbReference type="Orphanet" id="93473">
    <property type="disease" value="Hurler syndrome"/>
</dbReference>
<dbReference type="Orphanet" id="93476">
    <property type="disease" value="Hurler-Scheie syndrome"/>
</dbReference>
<dbReference type="Orphanet" id="93474">
    <property type="disease" value="Scheie syndrome"/>
</dbReference>
<dbReference type="PharmGKB" id="PA29638"/>
<dbReference type="VEuPathDB" id="HostDB:ENSG00000127415"/>
<dbReference type="eggNOG" id="ENOG502QRES">
    <property type="taxonomic scope" value="Eukaryota"/>
</dbReference>
<dbReference type="GeneTree" id="ENSGT00390000015494"/>
<dbReference type="InParanoid" id="P35475"/>
<dbReference type="OMA" id="RYETWNE"/>
<dbReference type="OrthoDB" id="15153at2759"/>
<dbReference type="PAN-GO" id="P35475">
    <property type="GO annotations" value="1 GO annotation based on evolutionary models"/>
</dbReference>
<dbReference type="PhylomeDB" id="P35475"/>
<dbReference type="TreeFam" id="TF323228"/>
<dbReference type="BioCyc" id="MetaCyc:HS05096-MONOMER"/>
<dbReference type="BRENDA" id="3.2.1.76">
    <property type="organism ID" value="2681"/>
</dbReference>
<dbReference type="PathwayCommons" id="P35475"/>
<dbReference type="Reactome" id="R-HSA-2024096">
    <property type="pathway name" value="HS-GAG degradation"/>
</dbReference>
<dbReference type="Reactome" id="R-HSA-2024101">
    <property type="pathway name" value="CS/DS degradation"/>
</dbReference>
<dbReference type="Reactome" id="R-HSA-2206302">
    <property type="pathway name" value="MPS I - Hurler syndrome"/>
</dbReference>
<dbReference type="SABIO-RK" id="P35475"/>
<dbReference type="SignaLink" id="P35475"/>
<dbReference type="BioGRID-ORCS" id="3425">
    <property type="hits" value="12 hits in 1156 CRISPR screens"/>
</dbReference>
<dbReference type="ChiTaRS" id="IDUA">
    <property type="organism name" value="human"/>
</dbReference>
<dbReference type="EvolutionaryTrace" id="P35475"/>
<dbReference type="GenomeRNAi" id="3425"/>
<dbReference type="Pharos" id="P35475">
    <property type="development level" value="Tbio"/>
</dbReference>
<dbReference type="PRO" id="PR:P35475"/>
<dbReference type="Proteomes" id="UP000005640">
    <property type="component" value="Chromosome 4"/>
</dbReference>
<dbReference type="RNAct" id="P35475">
    <property type="molecule type" value="protein"/>
</dbReference>
<dbReference type="Bgee" id="ENSG00000127415">
    <property type="expression patterns" value="Expressed in right hemisphere of cerebellum and 130 other cell types or tissues"/>
</dbReference>
<dbReference type="ExpressionAtlas" id="P35475">
    <property type="expression patterns" value="baseline and differential"/>
</dbReference>
<dbReference type="GO" id="GO:0070062">
    <property type="term" value="C:extracellular exosome"/>
    <property type="evidence" value="ECO:0007005"/>
    <property type="project" value="UniProtKB"/>
</dbReference>
<dbReference type="GO" id="GO:0043202">
    <property type="term" value="C:lysosomal lumen"/>
    <property type="evidence" value="ECO:0000304"/>
    <property type="project" value="Reactome"/>
</dbReference>
<dbReference type="GO" id="GO:0003940">
    <property type="term" value="F:L-iduronidase activity"/>
    <property type="evidence" value="ECO:0000314"/>
    <property type="project" value="UniProtKB"/>
</dbReference>
<dbReference type="GO" id="GO:0005102">
    <property type="term" value="F:signaling receptor binding"/>
    <property type="evidence" value="ECO:0007669"/>
    <property type="project" value="Ensembl"/>
</dbReference>
<dbReference type="GO" id="GO:0030209">
    <property type="term" value="P:dermatan sulfate proteoglycan catabolic process"/>
    <property type="evidence" value="ECO:0000314"/>
    <property type="project" value="UniProtKB"/>
</dbReference>
<dbReference type="GO" id="GO:0005984">
    <property type="term" value="P:disaccharide metabolic process"/>
    <property type="evidence" value="ECO:0000304"/>
    <property type="project" value="ProtInc"/>
</dbReference>
<dbReference type="GO" id="GO:0006027">
    <property type="term" value="P:glycosaminoglycan catabolic process"/>
    <property type="evidence" value="ECO:0000304"/>
    <property type="project" value="Reactome"/>
</dbReference>
<dbReference type="GO" id="GO:0030200">
    <property type="term" value="P:heparan sulfate proteoglycan catabolic process"/>
    <property type="evidence" value="ECO:0000304"/>
    <property type="project" value="Reactome"/>
</dbReference>
<dbReference type="GO" id="GO:0030211">
    <property type="term" value="P:heparin proteoglycan catabolic process"/>
    <property type="evidence" value="ECO:0000315"/>
    <property type="project" value="MGI"/>
</dbReference>
<dbReference type="FunFam" id="2.60.40.10:FF:001526">
    <property type="entry name" value="Alpha-L-iduronidase"/>
    <property type="match status" value="1"/>
</dbReference>
<dbReference type="FunFam" id="2.60.40.1500:FF:000001">
    <property type="entry name" value="Alpha-L-iduronidase"/>
    <property type="match status" value="1"/>
</dbReference>
<dbReference type="FunFam" id="3.20.20.80:FF:000059">
    <property type="entry name" value="Alpha-L-iduronidase"/>
    <property type="match status" value="1"/>
</dbReference>
<dbReference type="Gene3D" id="3.20.20.80">
    <property type="entry name" value="Glycosidases"/>
    <property type="match status" value="1"/>
</dbReference>
<dbReference type="Gene3D" id="2.60.40.1500">
    <property type="entry name" value="Glycosyl hydrolase domain, family 39"/>
    <property type="match status" value="1"/>
</dbReference>
<dbReference type="Gene3D" id="2.60.40.10">
    <property type="entry name" value="Immunoglobulins"/>
    <property type="match status" value="1"/>
</dbReference>
<dbReference type="InterPro" id="IPR049165">
    <property type="entry name" value="GH39_as"/>
</dbReference>
<dbReference type="InterPro" id="IPR049167">
    <property type="entry name" value="GH39_C"/>
</dbReference>
<dbReference type="InterPro" id="IPR049166">
    <property type="entry name" value="GH39_cat"/>
</dbReference>
<dbReference type="InterPro" id="IPR000514">
    <property type="entry name" value="Glyco_hydro_39"/>
</dbReference>
<dbReference type="InterPro" id="IPR017853">
    <property type="entry name" value="Glycoside_hydrolase_SF"/>
</dbReference>
<dbReference type="InterPro" id="IPR051923">
    <property type="entry name" value="Glycosyl_Hydrolase_39"/>
</dbReference>
<dbReference type="InterPro" id="IPR013783">
    <property type="entry name" value="Ig-like_fold"/>
</dbReference>
<dbReference type="PANTHER" id="PTHR12631">
    <property type="entry name" value="ALPHA-L-IDURONIDASE"/>
    <property type="match status" value="1"/>
</dbReference>
<dbReference type="PANTHER" id="PTHR12631:SF8">
    <property type="entry name" value="ALPHA-L-IDURONIDASE"/>
    <property type="match status" value="1"/>
</dbReference>
<dbReference type="Pfam" id="PF01229">
    <property type="entry name" value="Glyco_hydro_39"/>
    <property type="match status" value="1"/>
</dbReference>
<dbReference type="Pfam" id="PF21200">
    <property type="entry name" value="Glyco_hydro_39_C"/>
    <property type="match status" value="1"/>
</dbReference>
<dbReference type="PRINTS" id="PR00745">
    <property type="entry name" value="GLHYDRLASE39"/>
</dbReference>
<dbReference type="SUPFAM" id="SSF51445">
    <property type="entry name" value="(Trans)glycosidases"/>
    <property type="match status" value="1"/>
</dbReference>
<dbReference type="SUPFAM" id="SSF51011">
    <property type="entry name" value="Glycosyl hydrolase domain"/>
    <property type="match status" value="1"/>
</dbReference>
<dbReference type="PROSITE" id="PS01027">
    <property type="entry name" value="GLYCOSYL_HYDROL_F39"/>
    <property type="match status" value="1"/>
</dbReference>
<keyword id="KW-0002">3D-structure</keyword>
<keyword id="KW-0025">Alternative splicing</keyword>
<keyword id="KW-0225">Disease variant</keyword>
<keyword id="KW-1015">Disulfide bond</keyword>
<keyword id="KW-0325">Glycoprotein</keyword>
<keyword id="KW-0326">Glycosidase</keyword>
<keyword id="KW-0378">Hydrolase</keyword>
<keyword id="KW-0458">Lysosome</keyword>
<keyword id="KW-0510">Mucopolysaccharidosis</keyword>
<keyword id="KW-1267">Proteomics identification</keyword>
<keyword id="KW-1185">Reference proteome</keyword>
<keyword id="KW-0732">Signal</keyword>
<organism>
    <name type="scientific">Homo sapiens</name>
    <name type="common">Human</name>
    <dbReference type="NCBI Taxonomy" id="9606"/>
    <lineage>
        <taxon>Eukaryota</taxon>
        <taxon>Metazoa</taxon>
        <taxon>Chordata</taxon>
        <taxon>Craniata</taxon>
        <taxon>Vertebrata</taxon>
        <taxon>Euteleostomi</taxon>
        <taxon>Mammalia</taxon>
        <taxon>Eutheria</taxon>
        <taxon>Euarchontoglires</taxon>
        <taxon>Primates</taxon>
        <taxon>Haplorrhini</taxon>
        <taxon>Catarrhini</taxon>
        <taxon>Hominidae</taxon>
        <taxon>Homo</taxon>
    </lineage>
</organism>
<accession>P35475</accession>
<accession>B3KWK6</accession>
<name>IDUA_HUMAN</name>
<reference key="1">
    <citation type="journal article" date="1991" name="Proc. Natl. Acad. Sci. U.S.A.">
        <title>Human alpha-L-iduronidase: cDNA isolation and expression.</title>
        <authorList>
            <person name="Scott H.S."/>
            <person name="Anson D.S."/>
            <person name="Orsborn A.M."/>
            <person name="Nelson P.V."/>
            <person name="Clements P.R."/>
            <person name="Morris C.P."/>
            <person name="Hopwood J.J."/>
        </authorList>
    </citation>
    <scope>NUCLEOTIDE SEQUENCE [MRNA] (ISOFORM 1)</scope>
    <scope>VARIANT GLN-33</scope>
    <source>
        <tissue>Liver</tissue>
    </source>
</reference>
<reference key="2">
    <citation type="journal article" date="1992" name="Genomics">
        <title>Structure and sequence of the human alpha-L-iduronidase gene.</title>
        <authorList>
            <person name="Scott H.S."/>
            <person name="Guo X.H."/>
            <person name="Hopwood J.J."/>
            <person name="Morris C.P."/>
        </authorList>
    </citation>
    <scope>NUCLEOTIDE SEQUENCE [GENOMIC DNA]</scope>
    <scope>VARIANT GLN-33</scope>
</reference>
<reference key="3">
    <citation type="journal article" date="2004" name="Nat. Genet.">
        <title>Complete sequencing and characterization of 21,243 full-length human cDNAs.</title>
        <authorList>
            <person name="Ota T."/>
            <person name="Suzuki Y."/>
            <person name="Nishikawa T."/>
            <person name="Otsuki T."/>
            <person name="Sugiyama T."/>
            <person name="Irie R."/>
            <person name="Wakamatsu A."/>
            <person name="Hayashi K."/>
            <person name="Sato H."/>
            <person name="Nagai K."/>
            <person name="Kimura K."/>
            <person name="Makita H."/>
            <person name="Sekine M."/>
            <person name="Obayashi M."/>
            <person name="Nishi T."/>
            <person name="Shibahara T."/>
            <person name="Tanaka T."/>
            <person name="Ishii S."/>
            <person name="Yamamoto J."/>
            <person name="Saito K."/>
            <person name="Kawai Y."/>
            <person name="Isono Y."/>
            <person name="Nakamura Y."/>
            <person name="Nagahari K."/>
            <person name="Murakami K."/>
            <person name="Yasuda T."/>
            <person name="Iwayanagi T."/>
            <person name="Wagatsuma M."/>
            <person name="Shiratori A."/>
            <person name="Sudo H."/>
            <person name="Hosoiri T."/>
            <person name="Kaku Y."/>
            <person name="Kodaira H."/>
            <person name="Kondo H."/>
            <person name="Sugawara M."/>
            <person name="Takahashi M."/>
            <person name="Kanda K."/>
            <person name="Yokoi T."/>
            <person name="Furuya T."/>
            <person name="Kikkawa E."/>
            <person name="Omura Y."/>
            <person name="Abe K."/>
            <person name="Kamihara K."/>
            <person name="Katsuta N."/>
            <person name="Sato K."/>
            <person name="Tanikawa M."/>
            <person name="Yamazaki M."/>
            <person name="Ninomiya K."/>
            <person name="Ishibashi T."/>
            <person name="Yamashita H."/>
            <person name="Murakawa K."/>
            <person name="Fujimori K."/>
            <person name="Tanai H."/>
            <person name="Kimata M."/>
            <person name="Watanabe M."/>
            <person name="Hiraoka S."/>
            <person name="Chiba Y."/>
            <person name="Ishida S."/>
            <person name="Ono Y."/>
            <person name="Takiguchi S."/>
            <person name="Watanabe S."/>
            <person name="Yosida M."/>
            <person name="Hotuta T."/>
            <person name="Kusano J."/>
            <person name="Kanehori K."/>
            <person name="Takahashi-Fujii A."/>
            <person name="Hara H."/>
            <person name="Tanase T.-O."/>
            <person name="Nomura Y."/>
            <person name="Togiya S."/>
            <person name="Komai F."/>
            <person name="Hara R."/>
            <person name="Takeuchi K."/>
            <person name="Arita M."/>
            <person name="Imose N."/>
            <person name="Musashino K."/>
            <person name="Yuuki H."/>
            <person name="Oshima A."/>
            <person name="Sasaki N."/>
            <person name="Aotsuka S."/>
            <person name="Yoshikawa Y."/>
            <person name="Matsunawa H."/>
            <person name="Ichihara T."/>
            <person name="Shiohata N."/>
            <person name="Sano S."/>
            <person name="Moriya S."/>
            <person name="Momiyama H."/>
            <person name="Satoh N."/>
            <person name="Takami S."/>
            <person name="Terashima Y."/>
            <person name="Suzuki O."/>
            <person name="Nakagawa S."/>
            <person name="Senoh A."/>
            <person name="Mizoguchi H."/>
            <person name="Goto Y."/>
            <person name="Shimizu F."/>
            <person name="Wakebe H."/>
            <person name="Hishigaki H."/>
            <person name="Watanabe T."/>
            <person name="Sugiyama A."/>
            <person name="Takemoto M."/>
            <person name="Kawakami B."/>
            <person name="Yamazaki M."/>
            <person name="Watanabe K."/>
            <person name="Kumagai A."/>
            <person name="Itakura S."/>
            <person name="Fukuzumi Y."/>
            <person name="Fujimori Y."/>
            <person name="Komiyama M."/>
            <person name="Tashiro H."/>
            <person name="Tanigami A."/>
            <person name="Fujiwara T."/>
            <person name="Ono T."/>
            <person name="Yamada K."/>
            <person name="Fujii Y."/>
            <person name="Ozaki K."/>
            <person name="Hirao M."/>
            <person name="Ohmori Y."/>
            <person name="Kawabata A."/>
            <person name="Hikiji T."/>
            <person name="Kobatake N."/>
            <person name="Inagaki H."/>
            <person name="Ikema Y."/>
            <person name="Okamoto S."/>
            <person name="Okitani R."/>
            <person name="Kawakami T."/>
            <person name="Noguchi S."/>
            <person name="Itoh T."/>
            <person name="Shigeta K."/>
            <person name="Senba T."/>
            <person name="Matsumura K."/>
            <person name="Nakajima Y."/>
            <person name="Mizuno T."/>
            <person name="Morinaga M."/>
            <person name="Sasaki M."/>
            <person name="Togashi T."/>
            <person name="Oyama M."/>
            <person name="Hata H."/>
            <person name="Watanabe M."/>
            <person name="Komatsu T."/>
            <person name="Mizushima-Sugano J."/>
            <person name="Satoh T."/>
            <person name="Shirai Y."/>
            <person name="Takahashi Y."/>
            <person name="Nakagawa K."/>
            <person name="Okumura K."/>
            <person name="Nagase T."/>
            <person name="Nomura N."/>
            <person name="Kikuchi H."/>
            <person name="Masuho Y."/>
            <person name="Yamashita R."/>
            <person name="Nakai K."/>
            <person name="Yada T."/>
            <person name="Nakamura Y."/>
            <person name="Ohara O."/>
            <person name="Isogai T."/>
            <person name="Sugano S."/>
        </authorList>
    </citation>
    <scope>NUCLEOTIDE SEQUENCE [LARGE SCALE MRNA] (ISOFORM 2)</scope>
</reference>
<reference key="4">
    <citation type="journal article" date="2005" name="Nature">
        <title>Generation and annotation of the DNA sequences of human chromosomes 2 and 4.</title>
        <authorList>
            <person name="Hillier L.W."/>
            <person name="Graves T.A."/>
            <person name="Fulton R.S."/>
            <person name="Fulton L.A."/>
            <person name="Pepin K.H."/>
            <person name="Minx P."/>
            <person name="Wagner-McPherson C."/>
            <person name="Layman D."/>
            <person name="Wylie K."/>
            <person name="Sekhon M."/>
            <person name="Becker M.C."/>
            <person name="Fewell G.A."/>
            <person name="Delehaunty K.D."/>
            <person name="Miner T.L."/>
            <person name="Nash W.E."/>
            <person name="Kremitzki C."/>
            <person name="Oddy L."/>
            <person name="Du H."/>
            <person name="Sun H."/>
            <person name="Bradshaw-Cordum H."/>
            <person name="Ali J."/>
            <person name="Carter J."/>
            <person name="Cordes M."/>
            <person name="Harris A."/>
            <person name="Isak A."/>
            <person name="van Brunt A."/>
            <person name="Nguyen C."/>
            <person name="Du F."/>
            <person name="Courtney L."/>
            <person name="Kalicki J."/>
            <person name="Ozersky P."/>
            <person name="Abbott S."/>
            <person name="Armstrong J."/>
            <person name="Belter E.A."/>
            <person name="Caruso L."/>
            <person name="Cedroni M."/>
            <person name="Cotton M."/>
            <person name="Davidson T."/>
            <person name="Desai A."/>
            <person name="Elliott G."/>
            <person name="Erb T."/>
            <person name="Fronick C."/>
            <person name="Gaige T."/>
            <person name="Haakenson W."/>
            <person name="Haglund K."/>
            <person name="Holmes A."/>
            <person name="Harkins R."/>
            <person name="Kim K."/>
            <person name="Kruchowski S.S."/>
            <person name="Strong C.M."/>
            <person name="Grewal N."/>
            <person name="Goyea E."/>
            <person name="Hou S."/>
            <person name="Levy A."/>
            <person name="Martinka S."/>
            <person name="Mead K."/>
            <person name="McLellan M.D."/>
            <person name="Meyer R."/>
            <person name="Randall-Maher J."/>
            <person name="Tomlinson C."/>
            <person name="Dauphin-Kohlberg S."/>
            <person name="Kozlowicz-Reilly A."/>
            <person name="Shah N."/>
            <person name="Swearengen-Shahid S."/>
            <person name="Snider J."/>
            <person name="Strong J.T."/>
            <person name="Thompson J."/>
            <person name="Yoakum M."/>
            <person name="Leonard S."/>
            <person name="Pearman C."/>
            <person name="Trani L."/>
            <person name="Radionenko M."/>
            <person name="Waligorski J.E."/>
            <person name="Wang C."/>
            <person name="Rock S.M."/>
            <person name="Tin-Wollam A.-M."/>
            <person name="Maupin R."/>
            <person name="Latreille P."/>
            <person name="Wendl M.C."/>
            <person name="Yang S.-P."/>
            <person name="Pohl C."/>
            <person name="Wallis J.W."/>
            <person name="Spieth J."/>
            <person name="Bieri T.A."/>
            <person name="Berkowicz N."/>
            <person name="Nelson J.O."/>
            <person name="Osborne J."/>
            <person name="Ding L."/>
            <person name="Meyer R."/>
            <person name="Sabo A."/>
            <person name="Shotland Y."/>
            <person name="Sinha P."/>
            <person name="Wohldmann P.E."/>
            <person name="Cook L.L."/>
            <person name="Hickenbotham M.T."/>
            <person name="Eldred J."/>
            <person name="Williams D."/>
            <person name="Jones T.A."/>
            <person name="She X."/>
            <person name="Ciccarelli F.D."/>
            <person name="Izaurralde E."/>
            <person name="Taylor J."/>
            <person name="Schmutz J."/>
            <person name="Myers R.M."/>
            <person name="Cox D.R."/>
            <person name="Huang X."/>
            <person name="McPherson J.D."/>
            <person name="Mardis E.R."/>
            <person name="Clifton S.W."/>
            <person name="Warren W.C."/>
            <person name="Chinwalla A.T."/>
            <person name="Eddy S.R."/>
            <person name="Marra M.A."/>
            <person name="Ovcharenko I."/>
            <person name="Furey T.S."/>
            <person name="Miller W."/>
            <person name="Eichler E.E."/>
            <person name="Bork P."/>
            <person name="Suyama M."/>
            <person name="Torrents D."/>
            <person name="Waterston R.H."/>
            <person name="Wilson R.K."/>
        </authorList>
    </citation>
    <scope>NUCLEOTIDE SEQUENCE [LARGE SCALE GENOMIC DNA]</scope>
</reference>
<reference key="5">
    <citation type="journal article" date="1995" name="Hum. Mutat.">
        <title>Molecular genetics of mucopolysaccharidosis type I: diagnostic, clinical, and biological implications.</title>
        <authorList>
            <person name="Scott H.S."/>
            <person name="Bunge S."/>
            <person name="Gal A."/>
            <person name="Clarke L.A."/>
            <person name="Morris C.P."/>
            <person name="Hopwood J.J."/>
        </authorList>
    </citation>
    <scope>REVIEW ON VARIANTS</scope>
</reference>
<reference key="6">
    <citation type="journal article" date="2009" name="J. Proteome Res.">
        <title>Glycoproteomics analysis of human liver tissue by combination of multiple enzyme digestion and hydrazide chemistry.</title>
        <authorList>
            <person name="Chen R."/>
            <person name="Jiang X."/>
            <person name="Sun D."/>
            <person name="Han G."/>
            <person name="Wang F."/>
            <person name="Ye M."/>
            <person name="Wang L."/>
            <person name="Zou H."/>
        </authorList>
    </citation>
    <scope>GLYCOSYLATION [LARGE SCALE ANALYSIS] AT ASN-110</scope>
    <source>
        <tissue>Liver</tissue>
    </source>
</reference>
<reference evidence="33 34 35 36 37" key="7">
    <citation type="journal article" date="2013" name="Nat. Chem. Biol.">
        <title>Insights into mucopolysaccharidosis I from the structure and action of alpha-L-iduronidase.</title>
        <authorList>
            <person name="Bie H."/>
            <person name="Yin J."/>
            <person name="He X."/>
            <person name="Kermode A.R."/>
            <person name="Goddard-Borger E.D."/>
            <person name="Withers S.G."/>
            <person name="James M.N."/>
        </authorList>
    </citation>
    <scope>X-RAY CRYSTALLOGRAPHY (2.1 ANGSTROMS) OF 27-653 IN COMPLEX WITH IDURONATE ANALOGS</scope>
    <scope>CATALYTIC ACTIVITY</scope>
    <scope>ACTIVE SITE</scope>
    <scope>CHARACTERIZATION OF VARIANT MPS1H ARG-533</scope>
    <scope>DISULFIDE BOND</scope>
    <scope>GLYCOSYLATION AT ASN-110; ASN-372 AND ASN-415</scope>
</reference>
<reference evidence="31 32" key="8">
    <citation type="journal article" date="2013" name="Proc. Natl. Acad. Sci. U.S.A.">
        <title>Human alpha-L-iduronidase uses its own N-glycan as a substrate-binding and catalytic module.</title>
        <authorList>
            <person name="Maita N."/>
            <person name="Tsukimura T."/>
            <person name="Taniguchi T."/>
            <person name="Saito S."/>
            <person name="Ohno K."/>
            <person name="Taniguchi H."/>
            <person name="Sakuraba H."/>
        </authorList>
    </citation>
    <scope>X-RAY CRYSTALLOGRAPHY (2.3 ANGSTROMS) OF 27-653 IN COMPLEX WITH IDURONATE</scope>
    <scope>CATALYTIC ACTIVITY</scope>
    <scope>DISULFIDE BOND</scope>
    <scope>SUBUNIT</scope>
    <scope>GLYCOSYLATION AT ASN-110; ASN-190; ASN-372; ASN-415 AND ASN-451</scope>
    <scope>IDENTIFICATION BY MASS SPECTROMETRY</scope>
</reference>
<reference key="9">
    <citation type="journal article" date="1994" name="Hum. Mutat.">
        <title>Mutation analysis of 19 North American mucopolysaccharidosis type I patients: identification of two additional frequent mutations.</title>
        <authorList>
            <person name="Clarke L.A."/>
            <person name="Nelson P.V."/>
            <person name="Warrington C.L."/>
            <person name="Morris C.P."/>
            <person name="Hopwood J.J."/>
            <person name="Scott H.S."/>
        </authorList>
    </citation>
    <scope>VARIANT MPS1H THR-75</scope>
</reference>
<reference key="10">
    <citation type="journal article" date="1993" name="Hum. Mol. Genet.">
        <title>Two novel mutations causing mucopolysaccharidosis type I detected by single strand conformational analysis of the alpha-L-iduronidase gene.</title>
        <authorList>
            <person name="Clark L.A."/>
            <person name="Scott H.S."/>
        </authorList>
    </citation>
    <scope>VARIANT MPS1H/S PRO-82</scope>
</reference>
<reference key="11">
    <citation type="journal article" date="1993" name="Am. J. Hum. Genet.">
        <title>Identification of mutations in the alpha-L-iduronidase gene (IDUA) that cause Hurler and Scheie syndromes.</title>
        <authorList>
            <person name="Scott H.S."/>
            <person name="Litjens T."/>
            <person name="Nelson P.V."/>
            <person name="Thompson P.R."/>
            <person name="Brooks D.A."/>
            <person name="Hopwood J.J."/>
            <person name="Morris C.P."/>
        </authorList>
    </citation>
    <scope>VARIANT MPS1S GLN-89</scope>
</reference>
<reference key="12">
    <citation type="journal article" date="1993" name="Am. J. Hum. Genet.">
        <title>Molecular analysis of Hurler syndrome in Druze and Muslim Arab patients in Israel: multiple allelic mutations of the IDUA gene in a small geographic area.</title>
        <authorList>
            <person name="Bach G."/>
            <person name="Moskowitz S.M."/>
            <person name="Tieu P.T."/>
            <person name="Matynia A."/>
            <person name="Neufeld E.F."/>
        </authorList>
    </citation>
    <scope>VARIANTS MPS1H PRO-366 AND ARG-409</scope>
</reference>
<reference key="13">
    <citation type="journal article" date="1992" name="Hum. Mutat.">
        <title>Alpha-L-iduronidase mutations (Q70X and P533R) associate with a severe Hurler phenotype.</title>
        <authorList>
            <person name="Scott H.S."/>
            <person name="Litjens T."/>
            <person name="Nelson P.V."/>
            <person name="Brooks D.A."/>
            <person name="Hopwood J.J."/>
            <person name="Morris C.P."/>
        </authorList>
    </citation>
    <scope>VARIANT MPS1H ARG-533</scope>
</reference>
<reference key="14">
    <citation type="journal article" date="1994" name="Hum. Mol. Genet.">
        <title>Mucopolysaccharidosis type I: identification of 8 novel mutations and determination of the frequency of the two common alpha-L-iduronidase mutations (W402X and Q70X) among European patients.</title>
        <authorList>
            <person name="Bunge S."/>
            <person name="Kleijer W.J."/>
            <person name="Steglich C."/>
            <person name="Beck M."/>
            <person name="Zuther C."/>
            <person name="Morris C.P."/>
            <person name="Schwinger E."/>
            <person name="Hopwood J.J."/>
            <person name="Scott H.S."/>
            <person name="Gal A."/>
        </authorList>
    </citation>
    <scope>VARIANTS MPS1H ASP-51; THR-75; PRO-218; PRO-327; PRO-489 AND 16-SER--ALA-19 DEL</scope>
</reference>
<reference key="15">
    <citation type="journal article" date="1992" name="Hum. Genet.">
        <title>PCR detection of two RFLPs in exon I of the alpha-L-iduronidase (IDUA) gene.</title>
        <authorList>
            <person name="Scott H.S."/>
            <person name="Litjens T."/>
            <person name="Hopwood J.J."/>
            <person name="Morris C.P."/>
        </authorList>
    </citation>
    <scope>VARIANT GLN-33</scope>
</reference>
<reference key="16">
    <citation type="journal article" date="1993" name="Hum. Mol. Genet.">
        <title>Multiple polymorphisms within the alpha-L-iduronidase gene (IDUA): implications for a role in modification of MPS-I disease phenotype.</title>
        <authorList>
            <person name="Scott H.S."/>
            <person name="Nelson P.V."/>
            <person name="Litjens T."/>
            <person name="Hopwood J.J."/>
            <person name="Morris C.P."/>
        </authorList>
    </citation>
    <scope>VARIANT THR-361</scope>
</reference>
<reference key="17">
    <citation type="journal article" date="1995" name="Hum. Mutat.">
        <title>Four novel mutations underlying mild or intermediate forms of alpha-L-iduronidase deficiency (MPS IS and MPS IH/S).</title>
        <authorList>
            <person name="Tieu P.T."/>
            <person name="Bach G."/>
            <person name="Matynia A."/>
            <person name="Hwang M."/>
            <person name="Neufeld E.F."/>
        </authorList>
    </citation>
    <scope>VARIANTS MPS1H/S PRO-490 AND LEU-496</scope>
    <scope>VARIANT MPS1S PRO-492</scope>
</reference>
<reference key="18">
    <citation type="journal article" date="1995" name="Hum. Mutat.">
        <title>Mucopolysaccharidosis type I: identification of 13 novel mutations of the alpha-L-iduronidase gene.</title>
        <authorList>
            <person name="Bunge S."/>
            <person name="Kleijer W.J."/>
            <person name="Steglich C."/>
            <person name="Beck M."/>
            <person name="Schwinger E."/>
            <person name="Gal A."/>
        </authorList>
    </citation>
    <scope>VARIANTS MPS1S TRP-89 AND HIS-383</scope>
    <scope>VARIANT MPS1H 349-ASP-ASN-350 DEL</scope>
    <scope>VARIANTS MPS1H/S THR-504 AND ARG-626</scope>
</reference>
<reference key="19">
    <citation type="journal article" date="1996" name="Am. J. Hum. Genet.">
        <title>Molecular genetic defect underlying alpha-L-iduronidase pseudodeficiency.</title>
        <authorList>
            <person name="Aronovich E.L."/>
            <person name="Pan D."/>
            <person name="Whitley C.B."/>
        </authorList>
    </citation>
    <scope>VARIANT IDUA PSEUDODEFICIENCY THR-300</scope>
</reference>
<reference key="20">
    <citation type="journal article" date="1998" name="Hum. Mutat.">
        <title>A novel missense mutation in the human IDUA gene associated with a severe Hurler's phenotype.</title>
        <authorList>
            <person name="Bartholomew D.W."/>
            <person name="McClellan J.M."/>
        </authorList>
    </citation>
    <scope>VARIANT MPS1H ARG-388</scope>
</reference>
<reference key="21">
    <citation type="journal article" date="1999" name="Clin. Genet.">
        <title>Mucopolysaccharidosis type I: characterization of novel mutations affecting alpha-L-iduronidase activity.</title>
        <authorList>
            <person name="Lee-Chen G.J."/>
            <person name="Lin S.P."/>
            <person name="Tang Y.F."/>
            <person name="Chin Y.W."/>
        </authorList>
    </citation>
    <scope>VARIANT MPS1H/S GLY-619</scope>
</reference>
<reference key="22">
    <citation type="journal article" date="2000" name="Clin. Genet.">
        <title>Identification and characterization of -3c-g acceptor splice site mutation in human alpha-L-iduronidase associated with mucopolysaccharidosis type IH/S.</title>
        <authorList>
            <person name="Teng Y.N."/>
            <person name="Wang T.R."/>
            <person name="Hwu W.L."/>
            <person name="Lin S.P."/>
            <person name="Lee-Chen G.J."/>
        </authorList>
    </citation>
    <scope>VARIANT MPS1H/S ARG-346</scope>
</reference>
<reference key="23">
    <citation type="journal article" date="2003" name="Mol. Genet. Metab.">
        <title>Identification and characterization of 13 new mutations in mucopolysaccharidosis type I patients.</title>
        <authorList>
            <person name="Matte U."/>
            <person name="Yogalingam G."/>
            <person name="Brooks D."/>
            <person name="Leistner S."/>
            <person name="Schwartz I."/>
            <person name="Lima L."/>
            <person name="Norato D.Y."/>
            <person name="Brum J.M."/>
            <person name="Beesley C."/>
            <person name="Winchester B."/>
            <person name="Giugliani R."/>
            <person name="Hopwood J.J."/>
        </authorList>
    </citation>
    <scope>VARIANTS MPS1H ILE-133; LYS-182; ASP-208; TYR-349 AND ARG-533</scope>
    <scope>VARIANTS MPS1H/S PHE-260; PRO-327; ARG-380 AND PRO-628</scope>
    <scope>VARIANTS MPS1S GLN-89; ILE-350; HIS-383 AND ASP-445 DEL</scope>
</reference>
<reference key="24">
    <citation type="journal article" date="2004" name="Hum. Mutat.">
        <title>Identification and molecular characterization of alpha-L-iduronidase mutations present in mucopolysaccharidosis type I patients undergoing enzyme replacement therapy.</title>
        <authorList>
            <person name="Yogalingam G."/>
            <person name="Guo X.H."/>
            <person name="Muller V.J."/>
            <person name="Brooks D.A."/>
            <person name="Clements P.R."/>
            <person name="Kakkis E.D."/>
            <person name="Hopwood J.J."/>
        </authorList>
    </citation>
    <scope>VARIANTS MPS1H/S VAL-79; GLN-238; PRO-327; CYS-363; ARG-380; ARG-533 AND ILE-602</scope>
    <scope>VARIANT MPS1S ARG-423</scope>
    <scope>VARIANTS GLN-82; GLN-105; THR-361 AND ILE-454</scope>
    <scope>CHARACTERIZATION OF VARIANTS MPS1H/S VAL-79; GLN-238; CYS-363 AND ILE-602</scope>
    <scope>CHARACTERIZATION OF VARIANT MPS1S ARG-423</scope>
    <scope>CHARACTERIZATION OF VARIANT GLN-82</scope>
</reference>
<reference key="25">
    <citation type="journal article" date="2009" name="Am. J. Med. Genet. A">
        <title>Mucopolysaccharidosis type I in 21 Czech and Slovak patients: mutation analysis suggests a functional importance of C-terminus of the IDUA protein.</title>
        <authorList>
            <person name="Vazna A."/>
            <person name="Beesley C."/>
            <person name="Berna L."/>
            <person name="Stolnaja L."/>
            <person name="Myskova H."/>
            <person name="Bouckova M."/>
            <person name="Vlaskova H."/>
            <person name="Poupetova H."/>
            <person name="Zeman J."/>
            <person name="Magner M."/>
            <person name="Hlavata A."/>
            <person name="Winchester B."/>
            <person name="Hrebicek M."/>
            <person name="Dvorakova L."/>
        </authorList>
    </citation>
    <scope>VARIANTS MPS1H TYR-315; PRO-327 AND PHE-620</scope>
    <scope>CHARACTERIZATION OF VARIANTS MPS1H TYR-315 AND PHE-620</scope>
    <scope>VARIANT MPS1S ARG-380</scope>
    <scope>VARIANTS GLN-33; GLN-105; THR-361 AND ILE-454</scope>
</reference>
<reference key="26">
    <citation type="journal article" date="2011" name="Hum. Mutat.">
        <title>IDUA mutational profiling of a cohort of 102 European patients with mucopolysaccharidosis type I: identification and characterization of 35 novel alpha-L-iduronidase (IDUA) alleles.</title>
        <authorList>
            <person name="Bertola F."/>
            <person name="Filocamo M."/>
            <person name="Casati G."/>
            <person name="Mort M."/>
            <person name="Rosano C."/>
            <person name="Tylki-Szymanska A."/>
            <person name="Tuysuz B."/>
            <person name="Gabrielli O."/>
            <person name="Grossi S."/>
            <person name="Scarpa M."/>
            <person name="Parenti G."/>
            <person name="Antuzzi D."/>
            <person name="Dalmau J."/>
            <person name="Di Rocco M."/>
            <person name="Vici C.D."/>
            <person name="Okur I."/>
            <person name="Rosell J."/>
            <person name="Rovelli A."/>
            <person name="Furlan F."/>
            <person name="Rigoldi M."/>
            <person name="Biondi A."/>
            <person name="Cooper D.N."/>
            <person name="Parini R."/>
        </authorList>
    </citation>
    <scope>VARIANTS MPS1H/S ARG-84; LYS-178; LEU-188; ARG-265; LYS-276; PRO-396; ARG-423; PRO-436; ARG-496; ARG-533 AND PHE-535</scope>
    <scope>VARIANTS MPS1H ASP-51; PRO-103; PRO-327 AND ARG-385</scope>
    <scope>VARIANTS MPS1S CYS-76; TRP-89; GLU-219; LYS-276; LEU-306; LYS-348; PRO-490 AND PRO-492</scope>
    <scope>VARIANTS GLN-33; GLN-105; THR-361; ASN-449; ILE-454 AND THR-591</scope>
</reference>
<reference key="27">
    <citation type="journal article" date="2015" name="Clin. Genet.">
        <title>p.L18P: a novel IDUA mutation that causes a distinct attenuated phenotype in mucopolysaccharidosis type I patients.</title>
        <authorList>
            <person name="Pasqualim G."/>
            <person name="Ribeiro M.G."/>
            <person name="da Fonseca G.G."/>
            <person name="Szlago M."/>
            <person name="Schenone A."/>
            <person name="Lemes A."/>
            <person name="Rojas M.V."/>
            <person name="Matte U."/>
            <person name="Giugliani R."/>
        </authorList>
    </citation>
    <scope>VARIANT MPS1S PRO-18</scope>
</reference>
<reference key="28">
    <citation type="journal article" date="2019" name="Clin. Genet.">
        <title>Genotype-phenotype relationships in mucopolysaccharidosis type I (MPS I): Insights from the International MPS I Registry.</title>
        <authorList>
            <person name="Clarke L.A."/>
            <person name="Giugliani R."/>
            <person name="Guffon N."/>
            <person name="Jones S.A."/>
            <person name="Keenan H.A."/>
            <person name="Munoz-Rojas M.V."/>
            <person name="Okuyama T."/>
            <person name="Viskochil D."/>
            <person name="Whitley C.B."/>
            <person name="Wijburg F.A."/>
            <person name="Muenzer J."/>
        </authorList>
    </citation>
    <scope>VARIANT MPS1H ASN-349</scope>
    <scope>REVIEW</scope>
</reference>
<evidence type="ECO:0000255" key="1"/>
<evidence type="ECO:0000255" key="2">
    <source>
        <dbReference type="PROSITE-ProRule" id="PRU00498"/>
    </source>
</evidence>
<evidence type="ECO:0000255" key="3">
    <source>
        <dbReference type="PROSITE-ProRule" id="PRU10068"/>
    </source>
</evidence>
<evidence type="ECO:0000269" key="4">
    <source>
    </source>
</evidence>
<evidence type="ECO:0000269" key="5">
    <source>
    </source>
</evidence>
<evidence type="ECO:0000269" key="6">
    <source>
    </source>
</evidence>
<evidence type="ECO:0000269" key="7">
    <source>
    </source>
</evidence>
<evidence type="ECO:0000269" key="8">
    <source>
    </source>
</evidence>
<evidence type="ECO:0000269" key="9">
    <source>
    </source>
</evidence>
<evidence type="ECO:0000269" key="10">
    <source>
    </source>
</evidence>
<evidence type="ECO:0000269" key="11">
    <source>
    </source>
</evidence>
<evidence type="ECO:0000269" key="12">
    <source>
    </source>
</evidence>
<evidence type="ECO:0000269" key="13">
    <source>
    </source>
</evidence>
<evidence type="ECO:0000269" key="14">
    <source>
    </source>
</evidence>
<evidence type="ECO:0000269" key="15">
    <source>
    </source>
</evidence>
<evidence type="ECO:0000269" key="16">
    <source>
    </source>
</evidence>
<evidence type="ECO:0000269" key="17">
    <source>
    </source>
</evidence>
<evidence type="ECO:0000269" key="18">
    <source>
    </source>
</evidence>
<evidence type="ECO:0000269" key="19">
    <source>
    </source>
</evidence>
<evidence type="ECO:0000269" key="20">
    <source>
    </source>
</evidence>
<evidence type="ECO:0000269" key="21">
    <source>
    </source>
</evidence>
<evidence type="ECO:0000269" key="22">
    <source>
    </source>
</evidence>
<evidence type="ECO:0000269" key="23">
    <source>
    </source>
</evidence>
<evidence type="ECO:0000269" key="24">
    <source>
    </source>
</evidence>
<evidence type="ECO:0000269" key="25">
    <source>
    </source>
</evidence>
<evidence type="ECO:0000269" key="26">
    <source>
    </source>
</evidence>
<evidence type="ECO:0000269" key="27">
    <source>
    </source>
</evidence>
<evidence type="ECO:0000269" key="28">
    <source ref="20"/>
</evidence>
<evidence type="ECO:0000303" key="29">
    <source>
    </source>
</evidence>
<evidence type="ECO:0000305" key="30"/>
<evidence type="ECO:0007744" key="31">
    <source>
        <dbReference type="PDB" id="3W81"/>
    </source>
</evidence>
<evidence type="ECO:0007744" key="32">
    <source>
        <dbReference type="PDB" id="3W82"/>
    </source>
</evidence>
<evidence type="ECO:0007744" key="33">
    <source>
        <dbReference type="PDB" id="4KGJ"/>
    </source>
</evidence>
<evidence type="ECO:0007744" key="34">
    <source>
        <dbReference type="PDB" id="4KGL"/>
    </source>
</evidence>
<evidence type="ECO:0007744" key="35">
    <source>
        <dbReference type="PDB" id="4KH2"/>
    </source>
</evidence>
<evidence type="ECO:0007744" key="36">
    <source>
        <dbReference type="PDB" id="4MJ2"/>
    </source>
</evidence>
<evidence type="ECO:0007744" key="37">
    <source>
        <dbReference type="PDB" id="4MJ4"/>
    </source>
</evidence>
<evidence type="ECO:0007829" key="38">
    <source>
        <dbReference type="PDB" id="3W81"/>
    </source>
</evidence>
<evidence type="ECO:0007829" key="39">
    <source>
        <dbReference type="PDB" id="4KGJ"/>
    </source>
</evidence>
<evidence type="ECO:0007829" key="40">
    <source>
        <dbReference type="PDB" id="4KGL"/>
    </source>
</evidence>
<evidence type="ECO:0007829" key="41">
    <source>
        <dbReference type="PDB" id="4MJ2"/>
    </source>
</evidence>
<evidence type="ECO:0007829" key="42">
    <source>
        <dbReference type="PDB" id="4MJ4"/>
    </source>
</evidence>
<evidence type="ECO:0007829" key="43">
    <source>
        <dbReference type="PDB" id="6I6R"/>
    </source>
</evidence>
<sequence>MRPLRPRAALLALLASLLAAPPVAPAEAPHLVHVDAARALWPLRRFWRSTGFCPPLPHSQADQYVLSWDQQLNLAYVGAVPHRGIKQVRTHWLLELVTTRGSTGRGLSYNFTHLDGYLDLLRENQLLPGFELMGSASGHFTDFEDKQQVFEWKDLVSSLARRYIGRYGLAHVSKWNFETWNEPDHHDFDNVSMTMQGFLNYYDACSEGLRAASPALRLGGPGDSFHTPPRSPLSWGLLRHCHDGTNFFTGEAGVRLDYISLHRKGARSSISILEQEKVVAQQIRQLFPKFADTPIYNDEADPLVGWSLPQPWRADVTYAAMVVKVIAQHQNLLLANTTSAFPYALLSNDNAFLSYHPHPFAQRTLTARFQVNNTRPPHVQLLRKPVLTAMGLLALLDEEQLWAEVSQAGTVLDSNHTVGVLASAHRPQGPADAWRAAVLIYASDDTRAHPNRSVAVTLRLRGVPPGPGLVYVTRYLDNGLCSPDGEWRRLGRPVFPTAEQFRRMRAAEDPVAAAPRPLPAGGRLTLRPALRLPSLLLVHVCARPEKPPGQVTRLRALPLTQGQLVLVWSDEHVGSKCLWTYEIQFSQDGKAYTPVSRKPSTFNLFVFSPDTGAVSGSYRVRALDYWARPGPFSDPVPYLEVPVPRGPPSPGNP</sequence>
<feature type="signal peptide" evidence="1">
    <location>
        <begin position="1"/>
        <end position="27"/>
    </location>
</feature>
<feature type="chain" id="PRO_0000012200" description="Alpha-L-iduronidase">
    <location>
        <begin position="28"/>
        <end position="653"/>
    </location>
</feature>
<feature type="active site" description="Proton donor" evidence="3 16">
    <location>
        <position position="182"/>
    </location>
</feature>
<feature type="active site" description="Nucleophile" evidence="16">
    <location>
        <position position="299"/>
    </location>
</feature>
<feature type="binding site" evidence="15 16 31 32 34">
    <location>
        <position position="54"/>
    </location>
    <ligand>
        <name>alpha-D-mannopyranose</name>
        <dbReference type="ChEBI" id="CHEBI:28729"/>
    </ligand>
</feature>
<feature type="binding site" evidence="15 16 31 32 34">
    <location>
        <position position="56"/>
    </location>
    <ligand>
        <name>alpha-D-mannopyranose</name>
        <dbReference type="ChEBI" id="CHEBI:28729"/>
    </ligand>
</feature>
<feature type="binding site" evidence="15 16 31 32 34">
    <location>
        <position position="58"/>
    </location>
    <ligand>
        <name>alpha-D-mannopyranose</name>
        <dbReference type="ChEBI" id="CHEBI:28729"/>
    </ligand>
</feature>
<feature type="binding site" evidence="15 32">
    <location>
        <position position="91"/>
    </location>
    <ligand>
        <name>alpha-L-iduronate</name>
        <dbReference type="ChEBI" id="CHEBI:193037"/>
    </ligand>
</feature>
<feature type="binding site" evidence="15 32">
    <location>
        <position position="181"/>
    </location>
    <ligand>
        <name>alpha-L-iduronate</name>
        <dbReference type="ChEBI" id="CHEBI:193037"/>
    </ligand>
</feature>
<feature type="binding site" evidence="15 32">
    <location>
        <position position="182"/>
    </location>
    <ligand>
        <name>alpha-L-iduronate</name>
        <dbReference type="ChEBI" id="CHEBI:193037"/>
    </ligand>
</feature>
<feature type="binding site" evidence="15 32">
    <location>
        <position position="264"/>
    </location>
    <ligand>
        <name>alpha-L-iduronate</name>
        <dbReference type="ChEBI" id="CHEBI:193037"/>
    </ligand>
</feature>
<feature type="binding site" evidence="15 32">
    <location>
        <position position="299"/>
    </location>
    <ligand>
        <name>alpha-L-iduronate</name>
        <dbReference type="ChEBI" id="CHEBI:193037"/>
    </ligand>
</feature>
<feature type="binding site" evidence="15 32">
    <location>
        <position position="305"/>
    </location>
    <ligand>
        <name>alpha-L-iduronate</name>
        <dbReference type="ChEBI" id="CHEBI:193037"/>
    </ligand>
</feature>
<feature type="binding site" evidence="15 16 31 32 33 35">
    <location>
        <position position="306"/>
    </location>
    <ligand>
        <name>alpha-D-mannopyranose</name>
        <dbReference type="ChEBI" id="CHEBI:28729"/>
    </ligand>
</feature>
<feature type="binding site" evidence="15 32">
    <location>
        <position position="349"/>
    </location>
    <ligand>
        <name>alpha-L-iduronate</name>
        <dbReference type="ChEBI" id="CHEBI:193037"/>
    </ligand>
</feature>
<feature type="binding site" evidence="15 32">
    <location>
        <position position="363"/>
    </location>
    <ligand>
        <name>alpha-L-iduronate</name>
        <dbReference type="ChEBI" id="CHEBI:193037"/>
    </ligand>
</feature>
<feature type="binding site" evidence="15 31 32">
    <location>
        <position position="488"/>
    </location>
    <ligand>
        <name>alpha-D-mannopyranose</name>
        <dbReference type="ChEBI" id="CHEBI:28729"/>
    </ligand>
</feature>
<feature type="binding site" evidence="15 32">
    <location>
        <position position="492"/>
    </location>
    <ligand>
        <name>alpha-D-mannopyranose</name>
        <dbReference type="ChEBI" id="CHEBI:28729"/>
    </ligand>
</feature>
<feature type="binding site" evidence="15 31 32">
    <location>
        <position position="492"/>
    </location>
    <ligand>
        <name>beta-D-mannose</name>
        <dbReference type="ChEBI" id="CHEBI:28563"/>
    </ligand>
</feature>
<feature type="glycosylation site" description="N-linked (GlcNAc...) asparagine" evidence="11 15 16 31 32 33 34 35 36 37">
    <location>
        <position position="110"/>
    </location>
</feature>
<feature type="glycosylation site" description="N-linked (GlcNAc...) asparagine" evidence="15 31 32">
    <location>
        <position position="190"/>
    </location>
</feature>
<feature type="glycosylation site" description="N-linked (GlcNAc...) asparagine" evidence="2">
    <location>
        <position position="336"/>
    </location>
</feature>
<feature type="glycosylation site" description="N-linked (GlcNAc...) asparagine" evidence="15 16 31 32 33 34 35 36 37">
    <location>
        <position position="372"/>
    </location>
</feature>
<feature type="glycosylation site" description="N-linked (GlcNAc...) asparagine" evidence="15 16 31 32 33 34 35 36 37">
    <location>
        <position position="415"/>
    </location>
</feature>
<feature type="glycosylation site" description="N-linked (GlcNAc...) asparagine" evidence="15 31">
    <location>
        <position position="451"/>
    </location>
</feature>
<feature type="disulfide bond" evidence="15 16 31">
    <location>
        <begin position="541"/>
        <end position="577"/>
    </location>
</feature>
<feature type="splice variant" id="VSP_057029" description="In isoform 2." evidence="29">
    <original>CPPLPHSQADQYVLSWDQQLNLAYVGAVPHRGIKQVRTHWLLELVTTR</original>
    <variation>W</variation>
    <location>
        <begin position="53"/>
        <end position="100"/>
    </location>
</feature>
<feature type="splice variant" id="VSP_057030" description="In isoform 2." evidence="29">
    <original>GARSSISILEQEKVVAQQIRQLFPKFADTPIYNDEADPLVGWSLPQPWRADVTYAAMVVK</original>
    <variation>VRPAPPSAPVFCALSRCAPGRADPGGAEAAPPAGCAQLHLHPGAGEGRRAADPAALPQVRGHPHLQRRGGPAGGLVPATAVEGGRDLRGHGGEGGPAQRPARPPATFLPRRDRRAVAAPPGPSCPGHPQ</variation>
    <location>
        <begin position="265"/>
        <end position="324"/>
    </location>
</feature>
<feature type="sequence variant" id="VAR_003349" description="In MPS1H." evidence="21">
    <location>
        <begin position="16"/>
        <end position="19"/>
    </location>
</feature>
<feature type="sequence variant" id="VAR_072367" description="In MPS1S; dbSNP:rs794726878." evidence="17">
    <original>L</original>
    <variation>P</variation>
    <location>
        <position position="18"/>
    </location>
</feature>
<feature type="sequence variant" id="VAR_003350" description="In dbSNP:rs10794537." evidence="8 9 12 13 14">
    <original>H</original>
    <variation>Q</variation>
    <location>
        <position position="33"/>
    </location>
</feature>
<feature type="sequence variant" id="VAR_003351" description="In MPS1H; dbSNP:rs794726877." evidence="14 21">
    <original>G</original>
    <variation>D</variation>
    <location>
        <position position="51"/>
    </location>
</feature>
<feature type="sequence variant" id="VAR_003352" description="In MPS1H; dbSNP:rs758452450." evidence="21 22">
    <original>A</original>
    <variation>T</variation>
    <location>
        <position position="75"/>
    </location>
</feature>
<feature type="sequence variant" id="VAR_066215" description="In MPS1S; dbSNP:rs780165694." evidence="14">
    <original>Y</original>
    <variation>C</variation>
    <location>
        <position position="76"/>
    </location>
</feature>
<feature type="sequence variant" id="VAR_020975" description="In MPS1H/S; reduction of activity and protein levels; dbSNP:rs747981483." evidence="10">
    <original>A</original>
    <variation>V</variation>
    <location>
        <position position="79"/>
    </location>
</feature>
<feature type="sequence variant" id="VAR_003353" description="In MPS1H/S; dbSNP:rs794727239." evidence="26">
    <original>H</original>
    <variation>P</variation>
    <location>
        <position position="82"/>
    </location>
</feature>
<feature type="sequence variant" id="VAR_020976" description="Reduction of protein levels; dbSNP:rs148775298." evidence="10">
    <original>H</original>
    <variation>Q</variation>
    <location>
        <position position="82"/>
    </location>
</feature>
<feature type="sequence variant" id="VAR_066216" description="In MPS1H/S." evidence="14">
    <original>G</original>
    <variation>R</variation>
    <location>
        <position position="84"/>
    </location>
</feature>
<feature type="sequence variant" id="VAR_003354" description="In MPS1S; dbSNP:rs121965029." evidence="6 23">
    <original>R</original>
    <variation>Q</variation>
    <location>
        <position position="89"/>
    </location>
</feature>
<feature type="sequence variant" id="VAR_003355" description="In MPS1S; dbSNP:rs754966840." evidence="14 20">
    <original>R</original>
    <variation>W</variation>
    <location>
        <position position="89"/>
    </location>
</feature>
<feature type="sequence variant" id="VAR_066217" description="In MPS1H; uncertain significance." evidence="14">
    <original>T</original>
    <variation>P</variation>
    <location>
        <position position="103"/>
    </location>
</feature>
<feature type="sequence variant" id="VAR_003356" description="In dbSNP:rs3755955." evidence="10 12 14">
    <original>R</original>
    <variation>Q</variation>
    <location>
        <position position="105"/>
    </location>
</feature>
<feature type="sequence variant" id="VAR_003357" description="In dbSNP:rs148946496.">
    <original>G</original>
    <variation>R</variation>
    <location>
        <position position="116"/>
    </location>
</feature>
<feature type="sequence variant" id="VAR_020977" description="In MPS1H; dbSNP:rs558683362." evidence="6">
    <original>M</original>
    <variation>I</variation>
    <location>
        <position position="133"/>
    </location>
</feature>
<feature type="sequence variant" id="VAR_066218" description="In MPS1H/S; dbSNP:rs992336192." evidence="14">
    <original>E</original>
    <variation>K</variation>
    <location>
        <position position="178"/>
    </location>
</feature>
<feature type="sequence variant" id="VAR_020978" description="In MPS1H; dbSNP:rs754154200." evidence="6">
    <original>E</original>
    <variation>K</variation>
    <location>
        <position position="182"/>
    </location>
</feature>
<feature type="sequence variant" id="VAR_066219" description="In MPS1H/S; associated in cis with R-423." evidence="14">
    <original>F</original>
    <variation>L</variation>
    <location>
        <position position="188"/>
    </location>
</feature>
<feature type="sequence variant" id="VAR_020979" description="In MPS1H; dbSNP:rs1430681871." evidence="6">
    <original>G</original>
    <variation>D</variation>
    <location>
        <position position="208"/>
    </location>
</feature>
<feature type="sequence variant" id="VAR_003358" description="In MPS1H; dbSNP:rs869025584." evidence="21">
    <original>L</original>
    <variation>P</variation>
    <location>
        <position position="218"/>
    </location>
</feature>
<feature type="sequence variant" id="VAR_066220" description="In MPS1S; dbSNP:rs1230234600." evidence="14">
    <original>G</original>
    <variation>E</variation>
    <location>
        <position position="219"/>
    </location>
</feature>
<feature type="sequence variant" id="VAR_020980" description="In MPS1H/S; dbSNP:rs148789453." evidence="10">
    <original>L</original>
    <variation>Q</variation>
    <location>
        <position position="238"/>
    </location>
</feature>
<feature type="sequence variant" id="VAR_020981" description="In MPS1H/S." evidence="6">
    <original>S</original>
    <variation>F</variation>
    <location>
        <position position="260"/>
    </location>
</feature>
<feature type="sequence variant" id="VAR_066221" description="In MPS1H/S; dbSNP:rs369090960." evidence="14">
    <original>G</original>
    <variation>R</variation>
    <location>
        <position position="265"/>
    </location>
</feature>
<feature type="sequence variant" id="VAR_066222" description="In MPS1H/S and MPS1S." evidence="14">
    <original>E</original>
    <variation>K</variation>
    <location>
        <position position="276"/>
    </location>
</feature>
<feature type="sequence variant" id="VAR_003359">
    <original>V</original>
    <variation>A</variation>
    <location>
        <position position="279"/>
    </location>
</feature>
<feature type="sequence variant" id="VAR_017435" description="In IDUA pseudodeficiency; dbSNP:rs121965030." evidence="27">
    <original>A</original>
    <variation>T</variation>
    <location>
        <position position="300"/>
    </location>
</feature>
<feature type="sequence variant" id="VAR_066223" description="In MPS1S." evidence="14">
    <original>W</original>
    <variation>L</variation>
    <location>
        <position position="306"/>
    </location>
</feature>
<feature type="sequence variant" id="VAR_003360" description="In MPS1H; loss of function; undetectable enzyme activity." evidence="12">
    <original>D</original>
    <variation>Y</variation>
    <location>
        <position position="315"/>
    </location>
</feature>
<feature type="sequence variant" id="VAR_003361" description="In MPS1H; MPS1H/S; dbSNP:rs199801029." evidence="6 10 12 14 21">
    <original>A</original>
    <variation>P</variation>
    <location>
        <position position="327"/>
    </location>
</feature>
<feature type="sequence variant" id="VAR_017436" description="In MPS1H/S; 0.4% of normal activity; dbSNP:rs121965033." evidence="5">
    <original>L</original>
    <variation>R</variation>
    <location>
        <position position="346"/>
    </location>
</feature>
<feature type="sequence variant" id="VAR_066224" description="In MPS1S; dbSNP:rs746766617." evidence="14">
    <original>N</original>
    <variation>K</variation>
    <location>
        <position position="348"/>
    </location>
</feature>
<feature type="sequence variant" id="VAR_003363" description="In MPS1H." evidence="20">
    <location>
        <begin position="349"/>
        <end position="350"/>
    </location>
</feature>
<feature type="sequence variant" id="VAR_003362" description="In MPS1H; dbSNP:rs368454909." evidence="18">
    <original>D</original>
    <variation>N</variation>
    <location>
        <position position="349"/>
    </location>
</feature>
<feature type="sequence variant" id="VAR_020982" description="In MPS1H." evidence="6">
    <original>D</original>
    <variation>Y</variation>
    <location>
        <position position="349"/>
    </location>
</feature>
<feature type="sequence variant" id="VAR_020983" description="In MPS1S." evidence="6">
    <original>N</original>
    <variation>I</variation>
    <location>
        <position position="350"/>
    </location>
</feature>
<feature type="sequence variant" id="VAR_003364" description="In dbSNP:rs6831280." evidence="10 12 14 24">
    <original>A</original>
    <variation>T</variation>
    <location>
        <position position="361"/>
    </location>
</feature>
<feature type="sequence variant" id="VAR_020984" description="In MPS1H/S; loss of activity; dbSNP:rs750496798." evidence="10">
    <original>R</original>
    <variation>C</variation>
    <location>
        <position position="363"/>
    </location>
</feature>
<feature type="sequence variant" id="VAR_003365" description="In MPS1H; dbSNP:rs121965024." evidence="25">
    <original>T</original>
    <variation>P</variation>
    <location>
        <position position="366"/>
    </location>
</feature>
<feature type="sequence variant" id="VAR_003366" description="In MPS1H/S and MPS1S; dbSNP:rs762903007." evidence="6 10 12">
    <original>Q</original>
    <variation>R</variation>
    <location>
        <position position="380"/>
    </location>
</feature>
<feature type="sequence variant" id="VAR_003367" description="In MPS1S; 2-3% of normal activity; dbSNP:rs754949360." evidence="6 20">
    <original>R</original>
    <variation>H</variation>
    <location>
        <position position="383"/>
    </location>
</feature>
<feature type="sequence variant" id="VAR_066225" description="In MPS1H; dbSNP:rs1553917309." evidence="14">
    <original>P</original>
    <variation>R</variation>
    <location>
        <position position="385"/>
    </location>
</feature>
<feature type="sequence variant" id="VAR_003368" description="In MPS1H; dbSNP:rs794727896." evidence="28">
    <original>T</original>
    <variation>R</variation>
    <location>
        <position position="388"/>
    </location>
</feature>
<feature type="sequence variant" id="VAR_003369" description="In MPS1H.">
    <original>L</original>
    <variation>LALL</variation>
    <location>
        <position position="396"/>
    </location>
</feature>
<feature type="sequence variant" id="VAR_066226" description="In MPS1H/S." evidence="14">
    <original>L</original>
    <variation>P</variation>
    <location>
        <position position="396"/>
    </location>
</feature>
<feature type="sequence variant" id="VAR_003370" description="In MPS1H; dbSNP:rs11934801." evidence="25">
    <original>G</original>
    <variation>R</variation>
    <location>
        <position position="409"/>
    </location>
</feature>
<feature type="sequence variant" id="VAR_020985" description="In MPS1S and MPS1H/S; associated in cis with L-188 in a patient with MPS1H/S; significant reduction of activity and protein levels; dbSNP:rs931627770." evidence="10 14">
    <original>S</original>
    <variation>R</variation>
    <location>
        <position position="423"/>
    </location>
</feature>
<feature type="sequence variant" id="VAR_066227" description="In MPS1H/S." evidence="14">
    <original>A</original>
    <variation>P</variation>
    <location>
        <position position="436"/>
    </location>
</feature>
<feature type="sequence variant" id="VAR_003371" description="In MPS1S." evidence="6">
    <location>
        <position position="445"/>
    </location>
</feature>
<feature type="sequence variant" id="VAR_066228" description="In dbSNP:rs532731688." evidence="14">
    <original>H</original>
    <variation>N</variation>
    <location>
        <position position="449"/>
    </location>
</feature>
<feature type="sequence variant" id="VAR_003372" description="In dbSNP:rs73066479." evidence="10 12 14">
    <original>V</original>
    <variation>I</variation>
    <location>
        <position position="454"/>
    </location>
</feature>
<feature type="sequence variant" id="VAR_003373" description="In MPS1H." evidence="21">
    <original>R</original>
    <variation>P</variation>
    <location>
        <position position="489"/>
    </location>
</feature>
<feature type="sequence variant" id="VAR_003374" description="In MPS1H/S and MPS1S; dbSNP:rs121965027." evidence="14 19">
    <original>L</original>
    <variation>P</variation>
    <location>
        <position position="490"/>
    </location>
</feature>
<feature type="sequence variant" id="VAR_003375" description="In MPS1S; dbSNP:rs121965026." evidence="14 19">
    <original>R</original>
    <variation>P</variation>
    <location>
        <position position="492"/>
    </location>
</feature>
<feature type="sequence variant" id="VAR_003376" description="In MPS1H/S; dbSNP:rs772416503." evidence="19">
    <original>P</original>
    <variation>L</variation>
    <location>
        <position position="496"/>
    </location>
</feature>
<feature type="sequence variant" id="VAR_066229" description="In MPS1H/S; dbSNP:rs772416503." evidence="14">
    <original>P</original>
    <variation>R</variation>
    <location>
        <position position="496"/>
    </location>
</feature>
<feature type="sequence variant" id="VAR_003377" description="In MPS1H/S." evidence="20">
    <original>M</original>
    <variation>T</variation>
    <location>
        <position position="504"/>
    </location>
</feature>
<feature type="sequence variant" id="VAR_003378" description="In MPS1H and MPS1H/S; in 3% of the MPS1H patients; reduces catalytic activity and protein stability; dbSNP:rs121965021." evidence="6 7 10 14 16">
    <original>P</original>
    <variation>R</variation>
    <location>
        <position position="533"/>
    </location>
</feature>
<feature type="sequence variant" id="VAR_066230" description="In MPS1H/S." evidence="14">
    <original>L</original>
    <variation>F</variation>
    <location>
        <position position="535"/>
    </location>
</feature>
<feature type="sequence variant" id="VAR_066231" description="In dbSNP:rs398123257." evidence="14">
    <original>A</original>
    <variation>T</variation>
    <location>
        <position position="591"/>
    </location>
</feature>
<feature type="sequence variant" id="VAR_020986" description="In MPS1H/S; reduction of activity and protein levels." evidence="10">
    <original>F</original>
    <variation>I</variation>
    <location>
        <position position="602"/>
    </location>
</feature>
<feature type="sequence variant" id="VAR_017437" description="In MPS1H/S; 1.5% of normal activity; dbSNP:rs121965031." evidence="4">
    <original>R</original>
    <variation>G</variation>
    <location>
        <position position="619"/>
    </location>
</feature>
<feature type="sequence variant" id="VAR_072368" description="In MPS1H; loss of function; undetectable enzyme activity." evidence="12">
    <original>V</original>
    <variation>F</variation>
    <location>
        <position position="620"/>
    </location>
</feature>
<feature type="sequence variant" id="VAR_003379" description="In MPS1H/S; dbSNP:rs1281475543." evidence="20">
    <original>W</original>
    <variation>R</variation>
    <location>
        <position position="626"/>
    </location>
</feature>
<feature type="sequence variant" id="VAR_020987" description="In MPS1H/S; dbSNP:rs200448421." evidence="6">
    <original>R</original>
    <variation>P</variation>
    <location>
        <position position="628"/>
    </location>
</feature>
<feature type="sequence conflict" description="In Ref. 2; AAA51698." evidence="30" ref="2">
    <original>A</original>
    <variation>T</variation>
    <location>
        <position position="622"/>
    </location>
</feature>
<feature type="strand" evidence="43">
    <location>
        <begin position="30"/>
        <end position="42"/>
    </location>
</feature>
<feature type="strand" evidence="43">
    <location>
        <begin position="49"/>
        <end position="52"/>
    </location>
</feature>
<feature type="helix" evidence="38">
    <location>
        <begin position="58"/>
        <end position="60"/>
    </location>
</feature>
<feature type="helix" evidence="42">
    <location>
        <begin position="64"/>
        <end position="66"/>
    </location>
</feature>
<feature type="helix" evidence="43">
    <location>
        <begin position="68"/>
        <end position="78"/>
    </location>
</feature>
<feature type="helix" evidence="43">
    <location>
        <begin position="81"/>
        <end position="83"/>
    </location>
</feature>
<feature type="strand" evidence="43">
    <location>
        <begin position="87"/>
        <end position="90"/>
    </location>
</feature>
<feature type="helix" evidence="43">
    <location>
        <begin position="93"/>
        <end position="95"/>
    </location>
</feature>
<feature type="strand" evidence="43">
    <location>
        <begin position="98"/>
        <end position="100"/>
    </location>
</feature>
<feature type="turn" evidence="38">
    <location>
        <begin position="103"/>
        <end position="105"/>
    </location>
</feature>
<feature type="strand" evidence="43">
    <location>
        <begin position="108"/>
        <end position="110"/>
    </location>
</feature>
<feature type="helix" evidence="43">
    <location>
        <begin position="112"/>
        <end position="123"/>
    </location>
</feature>
<feature type="strand" evidence="43">
    <location>
        <begin position="127"/>
        <end position="131"/>
    </location>
</feature>
<feature type="turn" evidence="43">
    <location>
        <begin position="136"/>
        <end position="139"/>
    </location>
</feature>
<feature type="strand" evidence="39">
    <location>
        <begin position="142"/>
        <end position="144"/>
    </location>
</feature>
<feature type="helix" evidence="43">
    <location>
        <begin position="146"/>
        <end position="167"/>
    </location>
</feature>
<feature type="helix" evidence="43">
    <location>
        <begin position="169"/>
        <end position="172"/>
    </location>
</feature>
<feature type="strand" evidence="43">
    <location>
        <begin position="176"/>
        <end position="178"/>
    </location>
</feature>
<feature type="helix" evidence="41">
    <location>
        <begin position="183"/>
        <end position="185"/>
    </location>
</feature>
<feature type="helix" evidence="43">
    <location>
        <begin position="195"/>
        <end position="212"/>
    </location>
</feature>
<feature type="strand" evidence="43">
    <location>
        <begin position="217"/>
        <end position="223"/>
    </location>
</feature>
<feature type="helix" evidence="43">
    <location>
        <begin position="232"/>
        <end position="243"/>
    </location>
</feature>
<feature type="turn" evidence="43">
    <location>
        <begin position="247"/>
        <end position="249"/>
    </location>
</feature>
<feature type="strand" evidence="43">
    <location>
        <begin position="257"/>
        <end position="261"/>
    </location>
</feature>
<feature type="helix" evidence="43">
    <location>
        <begin position="269"/>
        <end position="286"/>
    </location>
</feature>
<feature type="helix" evidence="43">
    <location>
        <begin position="288"/>
        <end position="290"/>
    </location>
</feature>
<feature type="strand" evidence="43">
    <location>
        <begin position="295"/>
        <end position="298"/>
    </location>
</feature>
<feature type="strand" evidence="43">
    <location>
        <begin position="302"/>
        <end position="304"/>
    </location>
</feature>
<feature type="strand" evidence="40">
    <location>
        <begin position="306"/>
        <end position="308"/>
    </location>
</feature>
<feature type="helix" evidence="43">
    <location>
        <begin position="311"/>
        <end position="314"/>
    </location>
</feature>
<feature type="helix" evidence="43">
    <location>
        <begin position="316"/>
        <end position="332"/>
    </location>
</feature>
<feature type="strand" evidence="39">
    <location>
        <begin position="334"/>
        <end position="336"/>
    </location>
</feature>
<feature type="strand" evidence="43">
    <location>
        <begin position="343"/>
        <end position="346"/>
    </location>
</feature>
<feature type="turn" evidence="43">
    <location>
        <begin position="359"/>
        <end position="361"/>
    </location>
</feature>
<feature type="strand" evidence="43">
    <location>
        <begin position="362"/>
        <end position="371"/>
    </location>
</feature>
<feature type="strand" evidence="43">
    <location>
        <begin position="374"/>
        <end position="376"/>
    </location>
</feature>
<feature type="strand" evidence="43">
    <location>
        <begin position="378"/>
        <end position="383"/>
    </location>
</feature>
<feature type="helix" evidence="43">
    <location>
        <begin position="385"/>
        <end position="393"/>
    </location>
</feature>
<feature type="strand" evidence="43">
    <location>
        <begin position="398"/>
        <end position="407"/>
    </location>
</feature>
<feature type="strand" evidence="43">
    <location>
        <begin position="410"/>
        <end position="412"/>
    </location>
</feature>
<feature type="strand" evidence="43">
    <location>
        <begin position="414"/>
        <end position="425"/>
    </location>
</feature>
<feature type="strand" evidence="40">
    <location>
        <begin position="429"/>
        <end position="431"/>
    </location>
</feature>
<feature type="strand" evidence="43">
    <location>
        <begin position="435"/>
        <end position="442"/>
    </location>
</feature>
<feature type="strand" evidence="43">
    <location>
        <begin position="453"/>
        <end position="461"/>
    </location>
</feature>
<feature type="strand" evidence="43">
    <location>
        <begin position="470"/>
        <end position="477"/>
    </location>
</feature>
<feature type="turn" evidence="43">
    <location>
        <begin position="478"/>
        <end position="480"/>
    </location>
</feature>
<feature type="helix" evidence="43">
    <location>
        <begin position="483"/>
        <end position="489"/>
    </location>
</feature>
<feature type="helix" evidence="43">
    <location>
        <begin position="498"/>
        <end position="505"/>
    </location>
</feature>
<feature type="strand" evidence="43">
    <location>
        <begin position="511"/>
        <end position="517"/>
    </location>
</feature>
<feature type="turn" evidence="41">
    <location>
        <begin position="520"/>
        <end position="522"/>
    </location>
</feature>
<feature type="strand" evidence="43">
    <location>
        <begin position="524"/>
        <end position="526"/>
    </location>
</feature>
<feature type="strand" evidence="43">
    <location>
        <begin position="529"/>
        <end position="541"/>
    </location>
</feature>
<feature type="strand" evidence="43">
    <location>
        <begin position="552"/>
        <end position="560"/>
    </location>
</feature>
<feature type="strand" evidence="43">
    <location>
        <begin position="563"/>
        <end position="569"/>
    </location>
</feature>
<feature type="turn" evidence="43">
    <location>
        <begin position="571"/>
        <end position="573"/>
    </location>
</feature>
<feature type="strand" evidence="43">
    <location>
        <begin position="578"/>
        <end position="586"/>
    </location>
</feature>
<feature type="strand" evidence="43">
    <location>
        <begin position="602"/>
        <end position="607"/>
    </location>
</feature>
<feature type="strand" evidence="43">
    <location>
        <begin position="616"/>
        <end position="624"/>
    </location>
</feature>
<feature type="strand" evidence="43">
    <location>
        <begin position="636"/>
        <end position="641"/>
    </location>
</feature>